<feature type="chain" id="PRO_0000148726" description="Trk system potassium uptake protein TrkA homolog">
    <location>
        <begin position="1"/>
        <end position="216"/>
    </location>
</feature>
<feature type="domain" description="RCK N-terminal" evidence="2">
    <location>
        <begin position="1"/>
        <end position="116"/>
    </location>
</feature>
<feature type="domain" description="RCK C-terminal" evidence="3">
    <location>
        <begin position="136"/>
        <end position="216"/>
    </location>
</feature>
<feature type="binding site" description="in other chain" evidence="1">
    <location>
        <begin position="7"/>
        <end position="11"/>
    </location>
    <ligand>
        <name>NAD(+)</name>
        <dbReference type="ChEBI" id="CHEBI:57540"/>
        <note>ligand shared between dimeric partners</note>
    </ligand>
</feature>
<feature type="binding site" description="in other chain" evidence="1">
    <location>
        <position position="30"/>
    </location>
    <ligand>
        <name>NAD(+)</name>
        <dbReference type="ChEBI" id="CHEBI:57540"/>
        <note>ligand shared between dimeric partners</note>
    </ligand>
</feature>
<feature type="binding site" description="in other chain" evidence="1">
    <location>
        <begin position="73"/>
        <end position="74"/>
    </location>
    <ligand>
        <name>NAD(+)</name>
        <dbReference type="ChEBI" id="CHEBI:57540"/>
        <note>ligand shared between dimeric partners</note>
    </ligand>
</feature>
<feature type="binding site" evidence="1">
    <location>
        <position position="97"/>
    </location>
    <ligand>
        <name>NAD(+)</name>
        <dbReference type="ChEBI" id="CHEBI:57540"/>
        <note>ligand shared between dimeric partners</note>
    </ligand>
</feature>
<evidence type="ECO:0000250" key="1"/>
<evidence type="ECO:0000255" key="2">
    <source>
        <dbReference type="PROSITE-ProRule" id="PRU00543"/>
    </source>
</evidence>
<evidence type="ECO:0000255" key="3">
    <source>
        <dbReference type="PROSITE-ProRule" id="PRU00544"/>
    </source>
</evidence>
<evidence type="ECO:0000305" key="4"/>
<organism>
    <name type="scientific">Methanothermobacter thermautotrophicus (strain ATCC 29096 / DSM 1053 / JCM 10044 / NBRC 100330 / Delta H)</name>
    <name type="common">Methanobacterium thermoautotrophicum</name>
    <dbReference type="NCBI Taxonomy" id="187420"/>
    <lineage>
        <taxon>Archaea</taxon>
        <taxon>Methanobacteriati</taxon>
        <taxon>Methanobacteriota</taxon>
        <taxon>Methanomada group</taxon>
        <taxon>Methanobacteria</taxon>
        <taxon>Methanobacteriales</taxon>
        <taxon>Methanobacteriaceae</taxon>
        <taxon>Methanothermobacter</taxon>
    </lineage>
</organism>
<accession>O27333</accession>
<comment type="function">
    <text evidence="1">Part of a potassium transport system.</text>
</comment>
<comment type="domain">
    <text evidence="1">The RCK N-terminal domain binds NAD and possibly other effectors. This is expected to cause a conformation change that regulates potassium transport (By similarity).</text>
</comment>
<comment type="sequence caution" evidence="4">
    <conflict type="erroneous initiation">
        <sequence resource="EMBL-CDS" id="AAB85754"/>
    </conflict>
</comment>
<name>TRKA_METTH</name>
<proteinExistence type="inferred from homology"/>
<gene>
    <name type="primary">trkA</name>
    <name type="ordered locus">MTH_1265</name>
</gene>
<dbReference type="EMBL" id="AE000666">
    <property type="protein sequence ID" value="AAB85754.1"/>
    <property type="status" value="ALT_INIT"/>
    <property type="molecule type" value="Genomic_DNA"/>
</dbReference>
<dbReference type="PIR" id="B69036">
    <property type="entry name" value="B69036"/>
</dbReference>
<dbReference type="RefSeq" id="WP_048061014.1">
    <property type="nucleotide sequence ID" value="NC_000916.1"/>
</dbReference>
<dbReference type="SMR" id="O27333"/>
<dbReference type="FunCoup" id="O27333">
    <property type="interactions" value="1"/>
</dbReference>
<dbReference type="STRING" id="187420.MTH_1265"/>
<dbReference type="PaxDb" id="187420-MTH_1265"/>
<dbReference type="EnsemblBacteria" id="AAB85754">
    <property type="protein sequence ID" value="AAB85754"/>
    <property type="gene ID" value="MTH_1265"/>
</dbReference>
<dbReference type="KEGG" id="mth:MTH_1265"/>
<dbReference type="PATRIC" id="fig|187420.15.peg.1245"/>
<dbReference type="HOGENOM" id="CLU_046525_2_3_2"/>
<dbReference type="InParanoid" id="O27333"/>
<dbReference type="Proteomes" id="UP000005223">
    <property type="component" value="Chromosome"/>
</dbReference>
<dbReference type="GO" id="GO:0005886">
    <property type="term" value="C:plasma membrane"/>
    <property type="evidence" value="ECO:0007669"/>
    <property type="project" value="InterPro"/>
</dbReference>
<dbReference type="GO" id="GO:0015079">
    <property type="term" value="F:potassium ion transmembrane transporter activity"/>
    <property type="evidence" value="ECO:0007669"/>
    <property type="project" value="InterPro"/>
</dbReference>
<dbReference type="Gene3D" id="3.40.50.720">
    <property type="entry name" value="NAD(P)-binding Rossmann-like Domain"/>
    <property type="match status" value="1"/>
</dbReference>
<dbReference type="Gene3D" id="3.30.70.1450">
    <property type="entry name" value="Regulator of K+ conductance, C-terminal domain"/>
    <property type="match status" value="1"/>
</dbReference>
<dbReference type="InterPro" id="IPR006036">
    <property type="entry name" value="K_uptake_TrkA"/>
</dbReference>
<dbReference type="InterPro" id="IPR036291">
    <property type="entry name" value="NAD(P)-bd_dom_sf"/>
</dbReference>
<dbReference type="InterPro" id="IPR006037">
    <property type="entry name" value="RCK_C"/>
</dbReference>
<dbReference type="InterPro" id="IPR036721">
    <property type="entry name" value="RCK_C_sf"/>
</dbReference>
<dbReference type="InterPro" id="IPR003148">
    <property type="entry name" value="RCK_N"/>
</dbReference>
<dbReference type="InterPro" id="IPR050721">
    <property type="entry name" value="Trk_Ktr_HKT_K-transport"/>
</dbReference>
<dbReference type="PANTHER" id="PTHR43833">
    <property type="entry name" value="POTASSIUM CHANNEL PROTEIN 2-RELATED-RELATED"/>
    <property type="match status" value="1"/>
</dbReference>
<dbReference type="PANTHER" id="PTHR43833:SF5">
    <property type="entry name" value="TRK SYSTEM POTASSIUM UPTAKE PROTEIN TRKA"/>
    <property type="match status" value="1"/>
</dbReference>
<dbReference type="Pfam" id="PF02080">
    <property type="entry name" value="TrkA_C"/>
    <property type="match status" value="1"/>
</dbReference>
<dbReference type="Pfam" id="PF02254">
    <property type="entry name" value="TrkA_N"/>
    <property type="match status" value="1"/>
</dbReference>
<dbReference type="PRINTS" id="PR00335">
    <property type="entry name" value="KUPTAKETRKA"/>
</dbReference>
<dbReference type="SUPFAM" id="SSF51735">
    <property type="entry name" value="NAD(P)-binding Rossmann-fold domains"/>
    <property type="match status" value="1"/>
</dbReference>
<dbReference type="SUPFAM" id="SSF116726">
    <property type="entry name" value="TrkA C-terminal domain-like"/>
    <property type="match status" value="1"/>
</dbReference>
<dbReference type="PROSITE" id="PS51202">
    <property type="entry name" value="RCK_C"/>
    <property type="match status" value="1"/>
</dbReference>
<dbReference type="PROSITE" id="PS51201">
    <property type="entry name" value="RCK_N"/>
    <property type="match status" value="1"/>
</dbReference>
<reference key="1">
    <citation type="journal article" date="1997" name="J. Bacteriol.">
        <title>Complete genome sequence of Methanobacterium thermoautotrophicum deltaH: functional analysis and comparative genomics.</title>
        <authorList>
            <person name="Smith D.R."/>
            <person name="Doucette-Stamm L.A."/>
            <person name="Deloughery C."/>
            <person name="Lee H.-M."/>
            <person name="Dubois J."/>
            <person name="Aldredge T."/>
            <person name="Bashirzadeh R."/>
            <person name="Blakely D."/>
            <person name="Cook R."/>
            <person name="Gilbert K."/>
            <person name="Harrison D."/>
            <person name="Hoang L."/>
            <person name="Keagle P."/>
            <person name="Lumm W."/>
            <person name="Pothier B."/>
            <person name="Qiu D."/>
            <person name="Spadafora R."/>
            <person name="Vicare R."/>
            <person name="Wang Y."/>
            <person name="Wierzbowski J."/>
            <person name="Gibson R."/>
            <person name="Jiwani N."/>
            <person name="Caruso A."/>
            <person name="Bush D."/>
            <person name="Safer H."/>
            <person name="Patwell D."/>
            <person name="Prabhakar S."/>
            <person name="McDougall S."/>
            <person name="Shimer G."/>
            <person name="Goyal A."/>
            <person name="Pietrovski S."/>
            <person name="Church G.M."/>
            <person name="Daniels C.J."/>
            <person name="Mao J.-I."/>
            <person name="Rice P."/>
            <person name="Noelling J."/>
            <person name="Reeve J.N."/>
        </authorList>
    </citation>
    <scope>NUCLEOTIDE SEQUENCE [LARGE SCALE GENOMIC DNA]</scope>
    <source>
        <strain>ATCC 29096 / DSM 1053 / JCM 10044 / NBRC 100330 / Delta H</strain>
    </source>
</reference>
<sequence length="216" mass="23253">MYVVIMGGGRVGLTLANLLISDGHDVTLIENEETLCANAAVELDALVICGNGTDIKTLEEANISNADVFVAATGNDEANLLSCILVREYSIPKIIARVSNPDHEEAFKKVGIDHVISPERTAAGYLEKLITRPKVADLIVLGHGDAEILDMEIRSSKVVGKRVGDVSPTDKYIIVAIYNNGDLIIPQPDMVLERGTKVSVLVKTDAVKEATRRFTG</sequence>
<keyword id="KW-0406">Ion transport</keyword>
<keyword id="KW-0520">NAD</keyword>
<keyword id="KW-0630">Potassium</keyword>
<keyword id="KW-0633">Potassium transport</keyword>
<keyword id="KW-1185">Reference proteome</keyword>
<keyword id="KW-0813">Transport</keyword>
<protein>
    <recommendedName>
        <fullName>Trk system potassium uptake protein TrkA homolog</fullName>
        <shortName>K(+)-uptake protein TrkA homolog</shortName>
    </recommendedName>
</protein>